<evidence type="ECO:0000255" key="1">
    <source>
        <dbReference type="HAMAP-Rule" id="MF_00097"/>
    </source>
</evidence>
<protein>
    <recommendedName>
        <fullName evidence="1">Thiamine-phosphate synthase</fullName>
        <shortName evidence="1">TP synthase</shortName>
        <shortName evidence="1">TPS</shortName>
        <ecNumber evidence="1">2.5.1.3</ecNumber>
    </recommendedName>
    <alternativeName>
        <fullName evidence="1">Thiamine-phosphate pyrophosphorylase</fullName>
        <shortName evidence="1">TMP pyrophosphorylase</shortName>
        <shortName evidence="1">TMP-PPase</shortName>
    </alternativeName>
</protein>
<dbReference type="EC" id="2.5.1.3" evidence="1"/>
<dbReference type="EMBL" id="CP000046">
    <property type="protein sequence ID" value="AAW37045.1"/>
    <property type="molecule type" value="Genomic_DNA"/>
</dbReference>
<dbReference type="RefSeq" id="WP_000483153.1">
    <property type="nucleotide sequence ID" value="NZ_JBGOFO010000007.1"/>
</dbReference>
<dbReference type="SMR" id="Q5HEA8"/>
<dbReference type="KEGG" id="sac:SACOL2083"/>
<dbReference type="HOGENOM" id="CLU_018272_3_2_9"/>
<dbReference type="UniPathway" id="UPA00060">
    <property type="reaction ID" value="UER00141"/>
</dbReference>
<dbReference type="Proteomes" id="UP000000530">
    <property type="component" value="Chromosome"/>
</dbReference>
<dbReference type="GO" id="GO:0005737">
    <property type="term" value="C:cytoplasm"/>
    <property type="evidence" value="ECO:0007669"/>
    <property type="project" value="TreeGrafter"/>
</dbReference>
<dbReference type="GO" id="GO:0000287">
    <property type="term" value="F:magnesium ion binding"/>
    <property type="evidence" value="ECO:0007669"/>
    <property type="project" value="UniProtKB-UniRule"/>
</dbReference>
<dbReference type="GO" id="GO:0004789">
    <property type="term" value="F:thiamine-phosphate diphosphorylase activity"/>
    <property type="evidence" value="ECO:0007669"/>
    <property type="project" value="UniProtKB-UniRule"/>
</dbReference>
<dbReference type="GO" id="GO:0009228">
    <property type="term" value="P:thiamine biosynthetic process"/>
    <property type="evidence" value="ECO:0007669"/>
    <property type="project" value="UniProtKB-KW"/>
</dbReference>
<dbReference type="GO" id="GO:0009229">
    <property type="term" value="P:thiamine diphosphate biosynthetic process"/>
    <property type="evidence" value="ECO:0007669"/>
    <property type="project" value="UniProtKB-UniRule"/>
</dbReference>
<dbReference type="CDD" id="cd00564">
    <property type="entry name" value="TMP_TenI"/>
    <property type="match status" value="1"/>
</dbReference>
<dbReference type="FunFam" id="3.20.20.70:FF:000096">
    <property type="entry name" value="Thiamine-phosphate synthase"/>
    <property type="match status" value="1"/>
</dbReference>
<dbReference type="Gene3D" id="3.20.20.70">
    <property type="entry name" value="Aldolase class I"/>
    <property type="match status" value="1"/>
</dbReference>
<dbReference type="HAMAP" id="MF_00097">
    <property type="entry name" value="TMP_synthase"/>
    <property type="match status" value="1"/>
</dbReference>
<dbReference type="InterPro" id="IPR013785">
    <property type="entry name" value="Aldolase_TIM"/>
</dbReference>
<dbReference type="InterPro" id="IPR036206">
    <property type="entry name" value="ThiamineP_synth_sf"/>
</dbReference>
<dbReference type="InterPro" id="IPR022998">
    <property type="entry name" value="ThiamineP_synth_TenI"/>
</dbReference>
<dbReference type="InterPro" id="IPR034291">
    <property type="entry name" value="TMP_synthase"/>
</dbReference>
<dbReference type="NCBIfam" id="TIGR00693">
    <property type="entry name" value="thiE"/>
    <property type="match status" value="1"/>
</dbReference>
<dbReference type="PANTHER" id="PTHR20857">
    <property type="entry name" value="THIAMINE-PHOSPHATE PYROPHOSPHORYLASE"/>
    <property type="match status" value="1"/>
</dbReference>
<dbReference type="PANTHER" id="PTHR20857:SF15">
    <property type="entry name" value="THIAMINE-PHOSPHATE SYNTHASE"/>
    <property type="match status" value="1"/>
</dbReference>
<dbReference type="Pfam" id="PF02581">
    <property type="entry name" value="TMP-TENI"/>
    <property type="match status" value="1"/>
</dbReference>
<dbReference type="SUPFAM" id="SSF51391">
    <property type="entry name" value="Thiamin phosphate synthase"/>
    <property type="match status" value="1"/>
</dbReference>
<accession>Q5HEA8</accession>
<gene>
    <name evidence="1" type="primary">thiE</name>
    <name type="ordered locus">SACOL2083</name>
</gene>
<comment type="function">
    <text evidence="1">Condenses 4-methyl-5-(beta-hydroxyethyl)thiazole monophosphate (THZ-P) and 2-methyl-4-amino-5-hydroxymethyl pyrimidine pyrophosphate (HMP-PP) to form thiamine monophosphate (TMP).</text>
</comment>
<comment type="catalytic activity">
    <reaction evidence="1">
        <text>2-[(2R,5Z)-2-carboxy-4-methylthiazol-5(2H)-ylidene]ethyl phosphate + 4-amino-2-methyl-5-(diphosphooxymethyl)pyrimidine + 2 H(+) = thiamine phosphate + CO2 + diphosphate</text>
        <dbReference type="Rhea" id="RHEA:47844"/>
        <dbReference type="ChEBI" id="CHEBI:15378"/>
        <dbReference type="ChEBI" id="CHEBI:16526"/>
        <dbReference type="ChEBI" id="CHEBI:33019"/>
        <dbReference type="ChEBI" id="CHEBI:37575"/>
        <dbReference type="ChEBI" id="CHEBI:57841"/>
        <dbReference type="ChEBI" id="CHEBI:62899"/>
        <dbReference type="EC" id="2.5.1.3"/>
    </reaction>
</comment>
<comment type="catalytic activity">
    <reaction evidence="1">
        <text>2-(2-carboxy-4-methylthiazol-5-yl)ethyl phosphate + 4-amino-2-methyl-5-(diphosphooxymethyl)pyrimidine + 2 H(+) = thiamine phosphate + CO2 + diphosphate</text>
        <dbReference type="Rhea" id="RHEA:47848"/>
        <dbReference type="ChEBI" id="CHEBI:15378"/>
        <dbReference type="ChEBI" id="CHEBI:16526"/>
        <dbReference type="ChEBI" id="CHEBI:33019"/>
        <dbReference type="ChEBI" id="CHEBI:37575"/>
        <dbReference type="ChEBI" id="CHEBI:57841"/>
        <dbReference type="ChEBI" id="CHEBI:62890"/>
        <dbReference type="EC" id="2.5.1.3"/>
    </reaction>
</comment>
<comment type="catalytic activity">
    <reaction evidence="1">
        <text>4-methyl-5-(2-phosphooxyethyl)-thiazole + 4-amino-2-methyl-5-(diphosphooxymethyl)pyrimidine + H(+) = thiamine phosphate + diphosphate</text>
        <dbReference type="Rhea" id="RHEA:22328"/>
        <dbReference type="ChEBI" id="CHEBI:15378"/>
        <dbReference type="ChEBI" id="CHEBI:33019"/>
        <dbReference type="ChEBI" id="CHEBI:37575"/>
        <dbReference type="ChEBI" id="CHEBI:57841"/>
        <dbReference type="ChEBI" id="CHEBI:58296"/>
        <dbReference type="EC" id="2.5.1.3"/>
    </reaction>
</comment>
<comment type="cofactor">
    <cofactor evidence="1">
        <name>Mg(2+)</name>
        <dbReference type="ChEBI" id="CHEBI:18420"/>
    </cofactor>
    <text evidence="1">Binds 1 Mg(2+) ion per subunit.</text>
</comment>
<comment type="pathway">
    <text evidence="1">Cofactor biosynthesis; thiamine diphosphate biosynthesis; thiamine phosphate from 4-amino-2-methyl-5-diphosphomethylpyrimidine and 4-methyl-5-(2-phosphoethyl)-thiazole: step 1/1.</text>
</comment>
<comment type="similarity">
    <text evidence="1">Belongs to the thiamine-phosphate synthase family.</text>
</comment>
<sequence length="213" mass="23399">MFNQSYLNVYFICGTSDVPSHRTIHEVLEAALKAGITLFQFREKGESALKGNDKLVLAKELQHLCHQYDVPFIVNDDVSLAKEINADGIHVGQDDAKVKEIAQYFTDKIIGLSISDLDEYAKSDLTHVDYIGVGPIYPTPSKHDAHIPVGPEMIATFKEMNPQLPIVAIGGINTNNVAPIVEAGANGISVISAISKSENIEKTVNRFKDFFNN</sequence>
<proteinExistence type="inferred from homology"/>
<feature type="chain" id="PRO_0000157042" description="Thiamine-phosphate synthase">
    <location>
        <begin position="1"/>
        <end position="213"/>
    </location>
</feature>
<feature type="binding site" evidence="1">
    <location>
        <begin position="40"/>
        <end position="44"/>
    </location>
    <ligand>
        <name>4-amino-2-methyl-5-(diphosphooxymethyl)pyrimidine</name>
        <dbReference type="ChEBI" id="CHEBI:57841"/>
    </ligand>
</feature>
<feature type="binding site" evidence="1">
    <location>
        <position position="75"/>
    </location>
    <ligand>
        <name>4-amino-2-methyl-5-(diphosphooxymethyl)pyrimidine</name>
        <dbReference type="ChEBI" id="CHEBI:57841"/>
    </ligand>
</feature>
<feature type="binding site" evidence="1">
    <location>
        <position position="76"/>
    </location>
    <ligand>
        <name>Mg(2+)</name>
        <dbReference type="ChEBI" id="CHEBI:18420"/>
    </ligand>
</feature>
<feature type="binding site" evidence="1">
    <location>
        <position position="95"/>
    </location>
    <ligand>
        <name>Mg(2+)</name>
        <dbReference type="ChEBI" id="CHEBI:18420"/>
    </ligand>
</feature>
<feature type="binding site" evidence="1">
    <location>
        <position position="113"/>
    </location>
    <ligand>
        <name>4-amino-2-methyl-5-(diphosphooxymethyl)pyrimidine</name>
        <dbReference type="ChEBI" id="CHEBI:57841"/>
    </ligand>
</feature>
<feature type="binding site" evidence="1">
    <location>
        <begin position="139"/>
        <end position="141"/>
    </location>
    <ligand>
        <name>2-[(2R,5Z)-2-carboxy-4-methylthiazol-5(2H)-ylidene]ethyl phosphate</name>
        <dbReference type="ChEBI" id="CHEBI:62899"/>
    </ligand>
</feature>
<feature type="binding site" evidence="1">
    <location>
        <position position="142"/>
    </location>
    <ligand>
        <name>4-amino-2-methyl-5-(diphosphooxymethyl)pyrimidine</name>
        <dbReference type="ChEBI" id="CHEBI:57841"/>
    </ligand>
</feature>
<feature type="binding site" evidence="1">
    <location>
        <position position="171"/>
    </location>
    <ligand>
        <name>2-[(2R,5Z)-2-carboxy-4-methylthiazol-5(2H)-ylidene]ethyl phosphate</name>
        <dbReference type="ChEBI" id="CHEBI:62899"/>
    </ligand>
</feature>
<feature type="binding site" evidence="1">
    <location>
        <begin position="191"/>
        <end position="192"/>
    </location>
    <ligand>
        <name>2-[(2R,5Z)-2-carboxy-4-methylthiazol-5(2H)-ylidene]ethyl phosphate</name>
        <dbReference type="ChEBI" id="CHEBI:62899"/>
    </ligand>
</feature>
<keyword id="KW-0460">Magnesium</keyword>
<keyword id="KW-0479">Metal-binding</keyword>
<keyword id="KW-0784">Thiamine biosynthesis</keyword>
<keyword id="KW-0808">Transferase</keyword>
<reference key="1">
    <citation type="journal article" date="2005" name="J. Bacteriol.">
        <title>Insights on evolution of virulence and resistance from the complete genome analysis of an early methicillin-resistant Staphylococcus aureus strain and a biofilm-producing methicillin-resistant Staphylococcus epidermidis strain.</title>
        <authorList>
            <person name="Gill S.R."/>
            <person name="Fouts D.E."/>
            <person name="Archer G.L."/>
            <person name="Mongodin E.F."/>
            <person name="DeBoy R.T."/>
            <person name="Ravel J."/>
            <person name="Paulsen I.T."/>
            <person name="Kolonay J.F."/>
            <person name="Brinkac L.M."/>
            <person name="Beanan M.J."/>
            <person name="Dodson R.J."/>
            <person name="Daugherty S.C."/>
            <person name="Madupu R."/>
            <person name="Angiuoli S.V."/>
            <person name="Durkin A.S."/>
            <person name="Haft D.H."/>
            <person name="Vamathevan J.J."/>
            <person name="Khouri H."/>
            <person name="Utterback T.R."/>
            <person name="Lee C."/>
            <person name="Dimitrov G."/>
            <person name="Jiang L."/>
            <person name="Qin H."/>
            <person name="Weidman J."/>
            <person name="Tran K."/>
            <person name="Kang K.H."/>
            <person name="Hance I.R."/>
            <person name="Nelson K.E."/>
            <person name="Fraser C.M."/>
        </authorList>
    </citation>
    <scope>NUCLEOTIDE SEQUENCE [LARGE SCALE GENOMIC DNA]</scope>
    <source>
        <strain>COL</strain>
    </source>
</reference>
<organism>
    <name type="scientific">Staphylococcus aureus (strain COL)</name>
    <dbReference type="NCBI Taxonomy" id="93062"/>
    <lineage>
        <taxon>Bacteria</taxon>
        <taxon>Bacillati</taxon>
        <taxon>Bacillota</taxon>
        <taxon>Bacilli</taxon>
        <taxon>Bacillales</taxon>
        <taxon>Staphylococcaceae</taxon>
        <taxon>Staphylococcus</taxon>
    </lineage>
</organism>
<name>THIE_STAAC</name>